<keyword id="KW-0963">Cytoplasm</keyword>
<keyword id="KW-0489">Methyltransferase</keyword>
<keyword id="KW-0694">RNA-binding</keyword>
<keyword id="KW-0698">rRNA processing</keyword>
<keyword id="KW-0949">S-adenosyl-L-methionine</keyword>
<keyword id="KW-0808">Transferase</keyword>
<reference key="1">
    <citation type="journal article" date="2005" name="Nat. Biotechnol.">
        <title>Complete genome sequence of the plant commensal Pseudomonas fluorescens Pf-5.</title>
        <authorList>
            <person name="Paulsen I.T."/>
            <person name="Press C.M."/>
            <person name="Ravel J."/>
            <person name="Kobayashi D.Y."/>
            <person name="Myers G.S.A."/>
            <person name="Mavrodi D.V."/>
            <person name="DeBoy R.T."/>
            <person name="Seshadri R."/>
            <person name="Ren Q."/>
            <person name="Madupu R."/>
            <person name="Dodson R.J."/>
            <person name="Durkin A.S."/>
            <person name="Brinkac L.M."/>
            <person name="Daugherty S.C."/>
            <person name="Sullivan S.A."/>
            <person name="Rosovitz M.J."/>
            <person name="Gwinn M.L."/>
            <person name="Zhou L."/>
            <person name="Schneider D.J."/>
            <person name="Cartinhour S.W."/>
            <person name="Nelson W.C."/>
            <person name="Weidman J."/>
            <person name="Watkins K."/>
            <person name="Tran K."/>
            <person name="Khouri H."/>
            <person name="Pierson E.A."/>
            <person name="Pierson L.S. III"/>
            <person name="Thomashow L.S."/>
            <person name="Loper J.E."/>
        </authorList>
    </citation>
    <scope>NUCLEOTIDE SEQUENCE [LARGE SCALE GENOMIC DNA]</scope>
    <source>
        <strain>ATCC BAA-477 / NRRL B-23932 / Pf-5</strain>
    </source>
</reference>
<organism>
    <name type="scientific">Pseudomonas fluorescens (strain ATCC BAA-477 / NRRL B-23932 / Pf-5)</name>
    <dbReference type="NCBI Taxonomy" id="220664"/>
    <lineage>
        <taxon>Bacteria</taxon>
        <taxon>Pseudomonadati</taxon>
        <taxon>Pseudomonadota</taxon>
        <taxon>Gammaproteobacteria</taxon>
        <taxon>Pseudomonadales</taxon>
        <taxon>Pseudomonadaceae</taxon>
        <taxon>Pseudomonas</taxon>
    </lineage>
</organism>
<protein>
    <recommendedName>
        <fullName evidence="1">Ribosomal RNA large subunit methyltransferase K/L</fullName>
    </recommendedName>
    <domain>
        <recommendedName>
            <fullName evidence="1">23S rRNA m2G2445 methyltransferase</fullName>
            <ecNumber evidence="1">2.1.1.173</ecNumber>
        </recommendedName>
        <alternativeName>
            <fullName evidence="1">rRNA (guanine-N(2)-)-methyltransferase RlmL</fullName>
        </alternativeName>
    </domain>
    <domain>
        <recommendedName>
            <fullName evidence="1">23S rRNA m7G2069 methyltransferase</fullName>
            <ecNumber evidence="1">2.1.1.264</ecNumber>
        </recommendedName>
        <alternativeName>
            <fullName evidence="1">rRNA (guanine-N(7)-)-methyltransferase RlmK</fullName>
        </alternativeName>
    </domain>
</protein>
<name>RLMKL_PSEF5</name>
<gene>
    <name evidence="1" type="primary">rlmL</name>
    <name type="ordered locus">PFL_1878</name>
</gene>
<proteinExistence type="inferred from homology"/>
<sequence>MSDRYELFLTCPKGLEGLLIEEAVGLGLEQAREHTSAVRGMADMETAYRLCLWSRLANRVLLVLKRFPMKDAEDLYHGVLDVDWQDHMLADGTLAVEFSGHGSGIDNTHFGALKVKDAIVDKLRTPTGERPSVDKLNPDLRIHLRLDRGEAILSLDLSGHSLHQRGYRLQQGAAPLKENLAAAILIRSGWPRIAAEGGALADPMCGVGTFLVEAAMIAADIAPNLKREQWGFTAWLGHVPALWRKLHDEALARAQAGLAKPPLWIRGYEADPRLIQPGRNNVERAGLSEWIKIYQGEVGTFEPRPDQNQKGLVICNPPYGERLGDEASLLYLYQNLGGRLRQACLNWEAAVFTGAPDLGKRMGIRSHKQYSFWNGALPCKLLLIKVLPDQFVTGERRTAEQRQVEREQAQAAADEAPVRQYNKNGNPIKPAPAPAPVVEQARLSEGGQMFANRLQKNLKQLGKWAKREGIECYRVYDADMPEYSLAIDLYQDWVHVQEYAAPKSVDPEKAQARLFDALAAIPQALNVDKSRVVIKRRERQSGTKQYERQSAQGQFTEVREGGIKLLVNLTDYLDTGLFLDHRPMRMRIQQEAAGKRFLNLFCYTATASVHAAKGGARSTTSVDLSKTYLDWARRNFSLNGFSDKNRLEQGDVMAWLDSCRDEFDLIFIDPPTFSNSKRMEGVFDVQRDQVQLLDLAMARLAPGGVLYFSNNFRKFQLDENLAARYQIEEITAKTIDPDFARNGKIHRAWKVTAR</sequence>
<comment type="function">
    <text evidence="1">Specifically methylates the guanine in position 2445 (m2G2445) and the guanine in position 2069 (m7G2069) of 23S rRNA.</text>
</comment>
<comment type="catalytic activity">
    <reaction evidence="1">
        <text>guanosine(2445) in 23S rRNA + S-adenosyl-L-methionine = N(2)-methylguanosine(2445) in 23S rRNA + S-adenosyl-L-homocysteine + H(+)</text>
        <dbReference type="Rhea" id="RHEA:42740"/>
        <dbReference type="Rhea" id="RHEA-COMP:10215"/>
        <dbReference type="Rhea" id="RHEA-COMP:10216"/>
        <dbReference type="ChEBI" id="CHEBI:15378"/>
        <dbReference type="ChEBI" id="CHEBI:57856"/>
        <dbReference type="ChEBI" id="CHEBI:59789"/>
        <dbReference type="ChEBI" id="CHEBI:74269"/>
        <dbReference type="ChEBI" id="CHEBI:74481"/>
        <dbReference type="EC" id="2.1.1.173"/>
    </reaction>
</comment>
<comment type="catalytic activity">
    <reaction evidence="1">
        <text>guanosine(2069) in 23S rRNA + S-adenosyl-L-methionine = N(2)-methylguanosine(2069) in 23S rRNA + S-adenosyl-L-homocysteine + H(+)</text>
        <dbReference type="Rhea" id="RHEA:43772"/>
        <dbReference type="Rhea" id="RHEA-COMP:10688"/>
        <dbReference type="Rhea" id="RHEA-COMP:10689"/>
        <dbReference type="ChEBI" id="CHEBI:15378"/>
        <dbReference type="ChEBI" id="CHEBI:57856"/>
        <dbReference type="ChEBI" id="CHEBI:59789"/>
        <dbReference type="ChEBI" id="CHEBI:74269"/>
        <dbReference type="ChEBI" id="CHEBI:74481"/>
        <dbReference type="EC" id="2.1.1.264"/>
    </reaction>
</comment>
<comment type="subcellular location">
    <subcellularLocation>
        <location evidence="1">Cytoplasm</location>
    </subcellularLocation>
</comment>
<comment type="similarity">
    <text evidence="1">Belongs to the methyltransferase superfamily. RlmKL family.</text>
</comment>
<dbReference type="EC" id="2.1.1.173" evidence="1"/>
<dbReference type="EC" id="2.1.1.264" evidence="1"/>
<dbReference type="EMBL" id="CP000076">
    <property type="protein sequence ID" value="AAY91165.1"/>
    <property type="molecule type" value="Genomic_DNA"/>
</dbReference>
<dbReference type="RefSeq" id="WP_011060198.1">
    <property type="nucleotide sequence ID" value="NC_004129.6"/>
</dbReference>
<dbReference type="SMR" id="Q4KFI6"/>
<dbReference type="STRING" id="220664.PFL_1878"/>
<dbReference type="KEGG" id="pfl:PFL_1878"/>
<dbReference type="PATRIC" id="fig|220664.5.peg.1914"/>
<dbReference type="eggNOG" id="COG0116">
    <property type="taxonomic scope" value="Bacteria"/>
</dbReference>
<dbReference type="eggNOG" id="COG1092">
    <property type="taxonomic scope" value="Bacteria"/>
</dbReference>
<dbReference type="HOGENOM" id="CLU_014042_2_0_6"/>
<dbReference type="Proteomes" id="UP000008540">
    <property type="component" value="Chromosome"/>
</dbReference>
<dbReference type="GO" id="GO:0005737">
    <property type="term" value="C:cytoplasm"/>
    <property type="evidence" value="ECO:0007669"/>
    <property type="project" value="UniProtKB-SubCell"/>
</dbReference>
<dbReference type="GO" id="GO:0052915">
    <property type="term" value="F:23S rRNA (guanine(2445)-N(2))-methyltransferase activity"/>
    <property type="evidence" value="ECO:0007669"/>
    <property type="project" value="UniProtKB-UniRule"/>
</dbReference>
<dbReference type="GO" id="GO:0003723">
    <property type="term" value="F:RNA binding"/>
    <property type="evidence" value="ECO:0007669"/>
    <property type="project" value="UniProtKB-KW"/>
</dbReference>
<dbReference type="GO" id="GO:0070043">
    <property type="term" value="F:rRNA (guanine-N7-)-methyltransferase activity"/>
    <property type="evidence" value="ECO:0007669"/>
    <property type="project" value="UniProtKB-UniRule"/>
</dbReference>
<dbReference type="CDD" id="cd02440">
    <property type="entry name" value="AdoMet_MTases"/>
    <property type="match status" value="1"/>
</dbReference>
<dbReference type="CDD" id="cd11715">
    <property type="entry name" value="THUMP_AdoMetMT"/>
    <property type="match status" value="1"/>
</dbReference>
<dbReference type="Gene3D" id="3.30.2130.30">
    <property type="match status" value="1"/>
</dbReference>
<dbReference type="Gene3D" id="3.30.750.80">
    <property type="entry name" value="RNA methyltransferase domain (HRMD) like"/>
    <property type="match status" value="1"/>
</dbReference>
<dbReference type="Gene3D" id="3.40.50.150">
    <property type="entry name" value="Vaccinia Virus protein VP39"/>
    <property type="match status" value="2"/>
</dbReference>
<dbReference type="HAMAP" id="MF_01858">
    <property type="entry name" value="23SrRNA_methyltr_KL"/>
    <property type="match status" value="1"/>
</dbReference>
<dbReference type="InterPro" id="IPR017244">
    <property type="entry name" value="23SrRNA_methyltr_KL"/>
</dbReference>
<dbReference type="InterPro" id="IPR002052">
    <property type="entry name" value="DNA_methylase_N6_adenine_CS"/>
</dbReference>
<dbReference type="InterPro" id="IPR000241">
    <property type="entry name" value="RlmKL-like_Mtase"/>
</dbReference>
<dbReference type="InterPro" id="IPR054170">
    <property type="entry name" value="RlmL_1st"/>
</dbReference>
<dbReference type="InterPro" id="IPR019614">
    <property type="entry name" value="SAM-dep_methyl-trfase"/>
</dbReference>
<dbReference type="InterPro" id="IPR029063">
    <property type="entry name" value="SAM-dependent_MTases_sf"/>
</dbReference>
<dbReference type="InterPro" id="IPR004114">
    <property type="entry name" value="THUMP_dom"/>
</dbReference>
<dbReference type="NCBIfam" id="NF008748">
    <property type="entry name" value="PRK11783.1"/>
    <property type="match status" value="1"/>
</dbReference>
<dbReference type="PANTHER" id="PTHR47313">
    <property type="entry name" value="RIBOSOMAL RNA LARGE SUBUNIT METHYLTRANSFERASE K/L"/>
    <property type="match status" value="1"/>
</dbReference>
<dbReference type="PANTHER" id="PTHR47313:SF1">
    <property type="entry name" value="RIBOSOMAL RNA LARGE SUBUNIT METHYLTRANSFERASE K_L"/>
    <property type="match status" value="1"/>
</dbReference>
<dbReference type="Pfam" id="PF10672">
    <property type="entry name" value="Methyltrans_SAM"/>
    <property type="match status" value="1"/>
</dbReference>
<dbReference type="Pfam" id="PF22020">
    <property type="entry name" value="RlmL_1st"/>
    <property type="match status" value="1"/>
</dbReference>
<dbReference type="Pfam" id="PF02926">
    <property type="entry name" value="THUMP"/>
    <property type="match status" value="1"/>
</dbReference>
<dbReference type="Pfam" id="PF01170">
    <property type="entry name" value="UPF0020"/>
    <property type="match status" value="1"/>
</dbReference>
<dbReference type="PIRSF" id="PIRSF037618">
    <property type="entry name" value="RNA_Mtase_bacteria_prd"/>
    <property type="match status" value="1"/>
</dbReference>
<dbReference type="SMART" id="SM00981">
    <property type="entry name" value="THUMP"/>
    <property type="match status" value="1"/>
</dbReference>
<dbReference type="SUPFAM" id="SSF53335">
    <property type="entry name" value="S-adenosyl-L-methionine-dependent methyltransferases"/>
    <property type="match status" value="2"/>
</dbReference>
<dbReference type="PROSITE" id="PS51165">
    <property type="entry name" value="THUMP"/>
    <property type="match status" value="1"/>
</dbReference>
<accession>Q4KFI6</accession>
<feature type="chain" id="PRO_0000366788" description="Ribosomal RNA large subunit methyltransferase K/L">
    <location>
        <begin position="1"/>
        <end position="754"/>
    </location>
</feature>
<feature type="domain" description="THUMP" evidence="1">
    <location>
        <begin position="46"/>
        <end position="157"/>
    </location>
</feature>
<evidence type="ECO:0000255" key="1">
    <source>
        <dbReference type="HAMAP-Rule" id="MF_01858"/>
    </source>
</evidence>